<gene>
    <name evidence="1" type="primary">lspA</name>
    <name type="ordered locus">ECUMN_0028</name>
</gene>
<keyword id="KW-0064">Aspartyl protease</keyword>
<keyword id="KW-0997">Cell inner membrane</keyword>
<keyword id="KW-1003">Cell membrane</keyword>
<keyword id="KW-0378">Hydrolase</keyword>
<keyword id="KW-0472">Membrane</keyword>
<keyword id="KW-0645">Protease</keyword>
<keyword id="KW-0812">Transmembrane</keyword>
<keyword id="KW-1133">Transmembrane helix</keyword>
<sequence length="164" mass="18128">MSQSICSTGLRWLWLVVVVLIIDLGSKYLILQNFALGDTVPLFPSLNLHYARNYGAAFSFLADSGGWQRWFFAGIAIGISVILAVMMYRSKATQKLNNIAYALIIGGALGNLFDRLWHGFVVDMIDFYVGDWHFATFNLADTAICVGAALIVLEGFLPSKAKKQ</sequence>
<protein>
    <recommendedName>
        <fullName evidence="1">Lipoprotein signal peptidase</fullName>
        <ecNumber evidence="1">3.4.23.36</ecNumber>
    </recommendedName>
    <alternativeName>
        <fullName evidence="1">Prolipoprotein signal peptidase</fullName>
    </alternativeName>
    <alternativeName>
        <fullName evidence="1">Signal peptidase II</fullName>
        <shortName evidence="1">SPase II</shortName>
    </alternativeName>
</protein>
<reference key="1">
    <citation type="journal article" date="2009" name="PLoS Genet.">
        <title>Organised genome dynamics in the Escherichia coli species results in highly diverse adaptive paths.</title>
        <authorList>
            <person name="Touchon M."/>
            <person name="Hoede C."/>
            <person name="Tenaillon O."/>
            <person name="Barbe V."/>
            <person name="Baeriswyl S."/>
            <person name="Bidet P."/>
            <person name="Bingen E."/>
            <person name="Bonacorsi S."/>
            <person name="Bouchier C."/>
            <person name="Bouvet O."/>
            <person name="Calteau A."/>
            <person name="Chiapello H."/>
            <person name="Clermont O."/>
            <person name="Cruveiller S."/>
            <person name="Danchin A."/>
            <person name="Diard M."/>
            <person name="Dossat C."/>
            <person name="Karoui M.E."/>
            <person name="Frapy E."/>
            <person name="Garry L."/>
            <person name="Ghigo J.M."/>
            <person name="Gilles A.M."/>
            <person name="Johnson J."/>
            <person name="Le Bouguenec C."/>
            <person name="Lescat M."/>
            <person name="Mangenot S."/>
            <person name="Martinez-Jehanne V."/>
            <person name="Matic I."/>
            <person name="Nassif X."/>
            <person name="Oztas S."/>
            <person name="Petit M.A."/>
            <person name="Pichon C."/>
            <person name="Rouy Z."/>
            <person name="Ruf C.S."/>
            <person name="Schneider D."/>
            <person name="Tourret J."/>
            <person name="Vacherie B."/>
            <person name="Vallenet D."/>
            <person name="Medigue C."/>
            <person name="Rocha E.P.C."/>
            <person name="Denamur E."/>
        </authorList>
    </citation>
    <scope>NUCLEOTIDE SEQUENCE [LARGE SCALE GENOMIC DNA]</scope>
    <source>
        <strain>UMN026 / ExPEC</strain>
    </source>
</reference>
<accession>B7N7Q1</accession>
<name>LSPA_ECOLU</name>
<evidence type="ECO:0000255" key="1">
    <source>
        <dbReference type="HAMAP-Rule" id="MF_00161"/>
    </source>
</evidence>
<dbReference type="EC" id="3.4.23.36" evidence="1"/>
<dbReference type="EMBL" id="CU928163">
    <property type="protein sequence ID" value="CAR11251.1"/>
    <property type="molecule type" value="Genomic_DNA"/>
</dbReference>
<dbReference type="RefSeq" id="WP_000083369.1">
    <property type="nucleotide sequence ID" value="NC_011751.1"/>
</dbReference>
<dbReference type="RefSeq" id="YP_002410806.1">
    <property type="nucleotide sequence ID" value="NC_011751.1"/>
</dbReference>
<dbReference type="SMR" id="B7N7Q1"/>
<dbReference type="STRING" id="585056.ECUMN_0028"/>
<dbReference type="MEROPS" id="A08.001"/>
<dbReference type="GeneID" id="75169926"/>
<dbReference type="KEGG" id="eum:ECUMN_0028"/>
<dbReference type="PATRIC" id="fig|585056.7.peg.211"/>
<dbReference type="HOGENOM" id="CLU_083252_4_0_6"/>
<dbReference type="UniPathway" id="UPA00665"/>
<dbReference type="Proteomes" id="UP000007097">
    <property type="component" value="Chromosome"/>
</dbReference>
<dbReference type="GO" id="GO:0005886">
    <property type="term" value="C:plasma membrane"/>
    <property type="evidence" value="ECO:0007669"/>
    <property type="project" value="UniProtKB-SubCell"/>
</dbReference>
<dbReference type="GO" id="GO:0004190">
    <property type="term" value="F:aspartic-type endopeptidase activity"/>
    <property type="evidence" value="ECO:0007669"/>
    <property type="project" value="UniProtKB-UniRule"/>
</dbReference>
<dbReference type="GO" id="GO:0006508">
    <property type="term" value="P:proteolysis"/>
    <property type="evidence" value="ECO:0007669"/>
    <property type="project" value="UniProtKB-KW"/>
</dbReference>
<dbReference type="HAMAP" id="MF_00161">
    <property type="entry name" value="LspA"/>
    <property type="match status" value="1"/>
</dbReference>
<dbReference type="InterPro" id="IPR001872">
    <property type="entry name" value="Peptidase_A8"/>
</dbReference>
<dbReference type="NCBIfam" id="TIGR00077">
    <property type="entry name" value="lspA"/>
    <property type="match status" value="1"/>
</dbReference>
<dbReference type="PANTHER" id="PTHR33695">
    <property type="entry name" value="LIPOPROTEIN SIGNAL PEPTIDASE"/>
    <property type="match status" value="1"/>
</dbReference>
<dbReference type="PANTHER" id="PTHR33695:SF1">
    <property type="entry name" value="LIPOPROTEIN SIGNAL PEPTIDASE"/>
    <property type="match status" value="1"/>
</dbReference>
<dbReference type="Pfam" id="PF01252">
    <property type="entry name" value="Peptidase_A8"/>
    <property type="match status" value="1"/>
</dbReference>
<dbReference type="PRINTS" id="PR00781">
    <property type="entry name" value="LIPOSIGPTASE"/>
</dbReference>
<dbReference type="PROSITE" id="PS00855">
    <property type="entry name" value="SPASE_II"/>
    <property type="match status" value="1"/>
</dbReference>
<feature type="chain" id="PRO_1000190799" description="Lipoprotein signal peptidase">
    <location>
        <begin position="1"/>
        <end position="164"/>
    </location>
</feature>
<feature type="transmembrane region" description="Helical" evidence="1">
    <location>
        <begin position="12"/>
        <end position="32"/>
    </location>
</feature>
<feature type="transmembrane region" description="Helical" evidence="1">
    <location>
        <begin position="70"/>
        <end position="90"/>
    </location>
</feature>
<feature type="transmembrane region" description="Helical" evidence="1">
    <location>
        <begin position="102"/>
        <end position="122"/>
    </location>
</feature>
<feature type="transmembrane region" description="Helical" evidence="1">
    <location>
        <begin position="137"/>
        <end position="157"/>
    </location>
</feature>
<feature type="active site" evidence="1">
    <location>
        <position position="123"/>
    </location>
</feature>
<feature type="active site" evidence="1">
    <location>
        <position position="141"/>
    </location>
</feature>
<proteinExistence type="inferred from homology"/>
<comment type="function">
    <text evidence="1">This protein specifically catalyzes the removal of signal peptides from prolipoproteins.</text>
</comment>
<comment type="catalytic activity">
    <reaction evidence="1">
        <text>Release of signal peptides from bacterial membrane prolipoproteins. Hydrolyzes -Xaa-Yaa-Zaa-|-(S,diacylglyceryl)Cys-, in which Xaa is hydrophobic (preferably Leu), and Yaa (Ala or Ser) and Zaa (Gly or Ala) have small, neutral side chains.</text>
        <dbReference type="EC" id="3.4.23.36"/>
    </reaction>
</comment>
<comment type="pathway">
    <text evidence="1">Protein modification; lipoprotein biosynthesis (signal peptide cleavage).</text>
</comment>
<comment type="subcellular location">
    <subcellularLocation>
        <location evidence="1">Cell inner membrane</location>
        <topology evidence="1">Multi-pass membrane protein</topology>
    </subcellularLocation>
</comment>
<comment type="similarity">
    <text evidence="1">Belongs to the peptidase A8 family.</text>
</comment>
<organism>
    <name type="scientific">Escherichia coli O17:K52:H18 (strain UMN026 / ExPEC)</name>
    <dbReference type="NCBI Taxonomy" id="585056"/>
    <lineage>
        <taxon>Bacteria</taxon>
        <taxon>Pseudomonadati</taxon>
        <taxon>Pseudomonadota</taxon>
        <taxon>Gammaproteobacteria</taxon>
        <taxon>Enterobacterales</taxon>
        <taxon>Enterobacteriaceae</taxon>
        <taxon>Escherichia</taxon>
    </lineage>
</organism>